<name>CVPA_ECOLI</name>
<comment type="function">
    <text>Required for colicin V production from plasmid IncFI ColV3-K30.</text>
</comment>
<comment type="subcellular location">
    <subcellularLocation>
        <location>Cell inner membrane</location>
        <topology>Multi-pass membrane protein</topology>
    </subcellularLocation>
</comment>
<evidence type="ECO:0000255" key="1"/>
<keyword id="KW-0997">Cell inner membrane</keyword>
<keyword id="KW-1003">Cell membrane</keyword>
<keyword id="KW-0472">Membrane</keyword>
<keyword id="KW-1185">Reference proteome</keyword>
<keyword id="KW-0812">Transmembrane</keyword>
<keyword id="KW-1133">Transmembrane helix</keyword>
<dbReference type="EMBL" id="J01666">
    <property type="protein sequence ID" value="AAA24451.1"/>
    <property type="molecule type" value="Genomic_DNA"/>
</dbReference>
<dbReference type="EMBL" id="AH000881">
    <property type="protein sequence ID" value="AAA23968.1"/>
    <property type="molecule type" value="Genomic_DNA"/>
</dbReference>
<dbReference type="EMBL" id="U00096">
    <property type="protein sequence ID" value="AAC75373.1"/>
    <property type="molecule type" value="Genomic_DNA"/>
</dbReference>
<dbReference type="EMBL" id="AP009048">
    <property type="protein sequence ID" value="BAA16159.1"/>
    <property type="molecule type" value="Genomic_DNA"/>
</dbReference>
<dbReference type="PIR" id="A29803">
    <property type="entry name" value="XMECED"/>
</dbReference>
<dbReference type="RefSeq" id="NP_416816.1">
    <property type="nucleotide sequence ID" value="NC_000913.3"/>
</dbReference>
<dbReference type="RefSeq" id="WP_000262111.1">
    <property type="nucleotide sequence ID" value="NZ_LN832404.1"/>
</dbReference>
<dbReference type="SMR" id="P08550"/>
<dbReference type="BioGRID" id="4260527">
    <property type="interactions" value="13"/>
</dbReference>
<dbReference type="DIP" id="DIP-9354N"/>
<dbReference type="FunCoup" id="P08550">
    <property type="interactions" value="188"/>
</dbReference>
<dbReference type="IntAct" id="P08550">
    <property type="interactions" value="1"/>
</dbReference>
<dbReference type="STRING" id="511145.b2313"/>
<dbReference type="TCDB" id="9.B.160.1.16">
    <property type="family name" value="the colicin v production (cvpa) family"/>
</dbReference>
<dbReference type="PaxDb" id="511145-b2313"/>
<dbReference type="EnsemblBacteria" id="AAC75373">
    <property type="protein sequence ID" value="AAC75373"/>
    <property type="gene ID" value="b2313"/>
</dbReference>
<dbReference type="GeneID" id="945055"/>
<dbReference type="KEGG" id="ecj:JW2310"/>
<dbReference type="KEGG" id="eco:b2313"/>
<dbReference type="KEGG" id="ecoc:C3026_12895"/>
<dbReference type="PATRIC" id="fig|1411691.4.peg.4421"/>
<dbReference type="EchoBASE" id="EB0167"/>
<dbReference type="eggNOG" id="COG1286">
    <property type="taxonomic scope" value="Bacteria"/>
</dbReference>
<dbReference type="HOGENOM" id="CLU_092720_2_1_6"/>
<dbReference type="InParanoid" id="P08550"/>
<dbReference type="OMA" id="FTWVDWA"/>
<dbReference type="OrthoDB" id="9810601at2"/>
<dbReference type="PhylomeDB" id="P08550"/>
<dbReference type="BioCyc" id="EcoCyc:EG10169-MONOMER"/>
<dbReference type="PRO" id="PR:P08550"/>
<dbReference type="Proteomes" id="UP000000625">
    <property type="component" value="Chromosome"/>
</dbReference>
<dbReference type="GO" id="GO:0005886">
    <property type="term" value="C:plasma membrane"/>
    <property type="evidence" value="ECO:0000314"/>
    <property type="project" value="EcoCyc"/>
</dbReference>
<dbReference type="GO" id="GO:0009403">
    <property type="term" value="P:toxin biosynthetic process"/>
    <property type="evidence" value="ECO:0000315"/>
    <property type="project" value="EcoCyc"/>
</dbReference>
<dbReference type="InterPro" id="IPR003825">
    <property type="entry name" value="Colicin-V_CvpA"/>
</dbReference>
<dbReference type="InterPro" id="IPR052719">
    <property type="entry name" value="CvpA-like"/>
</dbReference>
<dbReference type="NCBIfam" id="NF008100">
    <property type="entry name" value="PRK10845.1"/>
    <property type="match status" value="1"/>
</dbReference>
<dbReference type="PANTHER" id="PTHR36926">
    <property type="entry name" value="COLICIN V PRODUCTION PROTEIN"/>
    <property type="match status" value="1"/>
</dbReference>
<dbReference type="PANTHER" id="PTHR36926:SF1">
    <property type="entry name" value="COLICIN V PRODUCTION PROTEIN"/>
    <property type="match status" value="1"/>
</dbReference>
<dbReference type="Pfam" id="PF02674">
    <property type="entry name" value="Colicin_V"/>
    <property type="match status" value="1"/>
</dbReference>
<organism>
    <name type="scientific">Escherichia coli (strain K12)</name>
    <dbReference type="NCBI Taxonomy" id="83333"/>
    <lineage>
        <taxon>Bacteria</taxon>
        <taxon>Pseudomonadati</taxon>
        <taxon>Pseudomonadota</taxon>
        <taxon>Gammaproteobacteria</taxon>
        <taxon>Enterobacterales</taxon>
        <taxon>Enterobacteriaceae</taxon>
        <taxon>Escherichia</taxon>
    </lineage>
</organism>
<protein>
    <recommendedName>
        <fullName>Colicin V production protein</fullName>
    </recommendedName>
    <alternativeName>
        <fullName>Protein DedE</fullName>
    </alternativeName>
    <alternativeName>
        <fullName>Pur regulon 18 kDa protein</fullName>
    </alternativeName>
</protein>
<feature type="chain" id="PRO_0000079581" description="Colicin V production protein">
    <location>
        <begin position="1"/>
        <end position="162"/>
    </location>
</feature>
<feature type="transmembrane region" description="Helical" evidence="1">
    <location>
        <begin position="1"/>
        <end position="21"/>
    </location>
</feature>
<feature type="topological domain" description="Cytoplasmic" evidence="1">
    <location>
        <begin position="22"/>
        <end position="31"/>
    </location>
</feature>
<feature type="transmembrane region" description="Helical" evidence="1">
    <location>
        <begin position="32"/>
        <end position="52"/>
    </location>
</feature>
<feature type="topological domain" description="Periplasmic" evidence="1">
    <location>
        <begin position="53"/>
        <end position="63"/>
    </location>
</feature>
<feature type="transmembrane region" description="Helical" evidence="1">
    <location>
        <begin position="64"/>
        <end position="84"/>
    </location>
</feature>
<feature type="topological domain" description="Cytoplasmic" evidence="1">
    <location>
        <begin position="85"/>
        <end position="98"/>
    </location>
</feature>
<feature type="transmembrane region" description="Helical" evidence="1">
    <location>
        <begin position="99"/>
        <end position="119"/>
    </location>
</feature>
<feature type="topological domain" description="Periplasmic" evidence="1">
    <location>
        <begin position="120"/>
        <end position="162"/>
    </location>
</feature>
<proteinExistence type="evidence at protein level"/>
<sequence>MVWIDYAIIAVIAFSSLVSLIRGFVREALSLVTWGCAFFVASHYYTYLSVWFTGFEDELVRNGIAIAVLFIATLIVGAIVNFVIGQLVEKTGLSGTDRVLGVCFGALRGVLIVAAILFFLDSFTGVSKSEDWSKSQLIPQFSFIIRCFFDYLQSSSSFLPRA</sequence>
<accession>P08550</accession>
<reference key="1">
    <citation type="journal article" date="1987" name="J. Biol. Chem.">
        <title>The hisT-purF region of the Escherichia coli K-12 chromosome. Identification of additional genes of the hisT and purF operons.</title>
        <authorList>
            <person name="Nonet M.L."/>
            <person name="Marvel C.C."/>
            <person name="Tolan D.R."/>
        </authorList>
    </citation>
    <scope>NUCLEOTIDE SEQUENCE [GENOMIC DNA]</scope>
    <source>
        <strain>K12</strain>
    </source>
</reference>
<reference key="2">
    <citation type="journal article" date="1985" name="J. Biol. Chem.">
        <title>Regulation of Escherichia coli purF. Analysis of the control region of a pur regulon gene.</title>
        <authorList>
            <person name="Makaroff C.A."/>
            <person name="Zalkin H."/>
        </authorList>
    </citation>
    <scope>NUCLEOTIDE SEQUENCE [GENOMIC DNA]</scope>
</reference>
<reference key="3">
    <citation type="journal article" date="1997" name="DNA Res.">
        <title>Construction of a contiguous 874-kb sequence of the Escherichia coli-K12 genome corresponding to 50.0-68.8 min on the linkage map and analysis of its sequence features.</title>
        <authorList>
            <person name="Yamamoto Y."/>
            <person name="Aiba H."/>
            <person name="Baba T."/>
            <person name="Hayashi K."/>
            <person name="Inada T."/>
            <person name="Isono K."/>
            <person name="Itoh T."/>
            <person name="Kimura S."/>
            <person name="Kitagawa M."/>
            <person name="Makino K."/>
            <person name="Miki T."/>
            <person name="Mitsuhashi N."/>
            <person name="Mizobuchi K."/>
            <person name="Mori H."/>
            <person name="Nakade S."/>
            <person name="Nakamura Y."/>
            <person name="Nashimoto H."/>
            <person name="Oshima T."/>
            <person name="Oyama S."/>
            <person name="Saito N."/>
            <person name="Sampei G."/>
            <person name="Satoh Y."/>
            <person name="Sivasundaram S."/>
            <person name="Tagami H."/>
            <person name="Takahashi H."/>
            <person name="Takeda J."/>
            <person name="Takemoto K."/>
            <person name="Uehara K."/>
            <person name="Wada C."/>
            <person name="Yamagata S."/>
            <person name="Horiuchi T."/>
        </authorList>
    </citation>
    <scope>NUCLEOTIDE SEQUENCE [LARGE SCALE GENOMIC DNA]</scope>
    <source>
        <strain>K12 / W3110 / ATCC 27325 / DSM 5911</strain>
    </source>
</reference>
<reference key="4">
    <citation type="journal article" date="1997" name="Science">
        <title>The complete genome sequence of Escherichia coli K-12.</title>
        <authorList>
            <person name="Blattner F.R."/>
            <person name="Plunkett G. III"/>
            <person name="Bloch C.A."/>
            <person name="Perna N.T."/>
            <person name="Burland V."/>
            <person name="Riley M."/>
            <person name="Collado-Vides J."/>
            <person name="Glasner J.D."/>
            <person name="Rode C.K."/>
            <person name="Mayhew G.F."/>
            <person name="Gregor J."/>
            <person name="Davis N.W."/>
            <person name="Kirkpatrick H.A."/>
            <person name="Goeden M.A."/>
            <person name="Rose D.J."/>
            <person name="Mau B."/>
            <person name="Shao Y."/>
        </authorList>
    </citation>
    <scope>NUCLEOTIDE SEQUENCE [LARGE SCALE GENOMIC DNA]</scope>
    <source>
        <strain>K12 / MG1655 / ATCC 47076</strain>
    </source>
</reference>
<reference key="5">
    <citation type="journal article" date="2006" name="Mol. Syst. Biol.">
        <title>Highly accurate genome sequences of Escherichia coli K-12 strains MG1655 and W3110.</title>
        <authorList>
            <person name="Hayashi K."/>
            <person name="Morooka N."/>
            <person name="Yamamoto Y."/>
            <person name="Fujita K."/>
            <person name="Isono K."/>
            <person name="Choi S."/>
            <person name="Ohtsubo E."/>
            <person name="Baba T."/>
            <person name="Wanner B.L."/>
            <person name="Mori H."/>
            <person name="Horiuchi T."/>
        </authorList>
    </citation>
    <scope>NUCLEOTIDE SEQUENCE [LARGE SCALE GENOMIC DNA]</scope>
    <source>
        <strain>K12 / W3110 / ATCC 27325 / DSM 5911</strain>
    </source>
</reference>
<reference key="6">
    <citation type="journal article" date="1989" name="J. Bacteriol.">
        <title>Characterization of a purF operon mutation which affects colicin V production.</title>
        <authorList>
            <person name="Fath M.J."/>
            <person name="Mahanty H.K."/>
            <person name="Kolter R."/>
        </authorList>
    </citation>
    <scope>CHARACTERIZATION</scope>
</reference>
<reference key="7">
    <citation type="journal article" date="2005" name="Science">
        <title>Global topology analysis of the Escherichia coli inner membrane proteome.</title>
        <authorList>
            <person name="Daley D.O."/>
            <person name="Rapp M."/>
            <person name="Granseth E."/>
            <person name="Melen K."/>
            <person name="Drew D."/>
            <person name="von Heijne G."/>
        </authorList>
    </citation>
    <scope>TOPOLOGY [LARGE SCALE ANALYSIS]</scope>
    <source>
        <strain>K12 / MG1655 / ATCC 47076</strain>
    </source>
</reference>
<gene>
    <name type="primary">cvpA</name>
    <name type="synonym">dedE</name>
    <name type="ordered locus">b2313</name>
    <name type="ordered locus">JW2310</name>
</gene>